<comment type="function">
    <text evidence="6">Catalyzes the second and fifth step in the 'de novo' purine biosynthesis pathway; contains phosphoribosylamine--glycine ligase (GARS) and phosphoribosylformylglycinamidine cyclo-ligase (AIRS) activities.</text>
</comment>
<comment type="catalytic activity">
    <reaction evidence="1">
        <text>2-formamido-N(1)-(5-O-phospho-beta-D-ribosyl)acetamidine + ATP = 5-amino-1-(5-phospho-beta-D-ribosyl)imidazole + ADP + phosphate + H(+)</text>
        <dbReference type="Rhea" id="RHEA:23032"/>
        <dbReference type="ChEBI" id="CHEBI:15378"/>
        <dbReference type="ChEBI" id="CHEBI:30616"/>
        <dbReference type="ChEBI" id="CHEBI:43474"/>
        <dbReference type="ChEBI" id="CHEBI:137981"/>
        <dbReference type="ChEBI" id="CHEBI:147287"/>
        <dbReference type="ChEBI" id="CHEBI:456216"/>
        <dbReference type="EC" id="6.3.3.1"/>
    </reaction>
</comment>
<comment type="catalytic activity">
    <reaction evidence="1">
        <text>5-phospho-beta-D-ribosylamine + glycine + ATP = N(1)-(5-phospho-beta-D-ribosyl)glycinamide + ADP + phosphate + H(+)</text>
        <dbReference type="Rhea" id="RHEA:17453"/>
        <dbReference type="ChEBI" id="CHEBI:15378"/>
        <dbReference type="ChEBI" id="CHEBI:30616"/>
        <dbReference type="ChEBI" id="CHEBI:43474"/>
        <dbReference type="ChEBI" id="CHEBI:57305"/>
        <dbReference type="ChEBI" id="CHEBI:58681"/>
        <dbReference type="ChEBI" id="CHEBI:143788"/>
        <dbReference type="ChEBI" id="CHEBI:456216"/>
        <dbReference type="EC" id="6.3.4.13"/>
    </reaction>
</comment>
<comment type="cofactor">
    <cofactor evidence="3">
        <name>Mg(2+)</name>
        <dbReference type="ChEBI" id="CHEBI:18420"/>
    </cofactor>
    <cofactor evidence="3">
        <name>Mn(2+)</name>
        <dbReference type="ChEBI" id="CHEBI:29035"/>
    </cofactor>
    <text evidence="5">Binds two magnesium or manganese ions per subunit.</text>
</comment>
<comment type="pathway">
    <text evidence="5">Purine metabolism; IMP biosynthesis via de novo pathway; 5-amino-1-(5-phospho-D-ribosyl)imidazole from N(2)-formyl-N(1)-(5-phospho-D-ribosyl)glycinamide: step 2/2.</text>
</comment>
<comment type="pathway">
    <text evidence="5">Purine metabolism; IMP biosynthesis via de novo pathway; N(1)-(5-phospho-D-ribosyl)glycinamide from 5-phospho-alpha-D-ribose 1-diphosphate: step 2/2.</text>
</comment>
<comment type="subcellular location">
    <subcellularLocation>
        <location evidence="1">Cytoplasm</location>
        <location evidence="1">Cytosol</location>
    </subcellularLocation>
</comment>
<comment type="similarity">
    <text evidence="5">In the N-terminal section; belongs to the GARS family.</text>
</comment>
<comment type="similarity">
    <text evidence="5">In the C-terminal section; belongs to the AIR synthase family.</text>
</comment>
<organism evidence="7">
    <name type="scientific">Pichia angusta</name>
    <name type="common">Yeast</name>
    <name type="synonym">Hansenula polymorpha</name>
    <dbReference type="NCBI Taxonomy" id="870730"/>
    <lineage>
        <taxon>Eukaryota</taxon>
        <taxon>Fungi</taxon>
        <taxon>Dikarya</taxon>
        <taxon>Ascomycota</taxon>
        <taxon>Saccharomycotina</taxon>
        <taxon>Pichiomycetes</taxon>
        <taxon>Pichiales</taxon>
        <taxon>Pichiaceae</taxon>
        <taxon>Ogataea</taxon>
    </lineage>
</organism>
<sequence>MEKINVLVVGNGGREHALVWKLAQSPWAKHIFVAPGNGGFSKLENVTSVPIGSSPSDFGSLVDFATKHNVGLVIPGPEQPLVDGITTWFQKAGIPVFGPSAKAARMEGSKTFSKDFMKKHNIPTARYENFTDYEAAKQYIANSSHNLVIKASGIAAGKGVLIPANKQEAYEAIKEIMVNKQFGSAGDEVVIEEFLEGDELSILCISDGYSFVDLPPAQDHKRIGDGDTGLNTGGMGAYSPAPIGTPSLLEKIRKNILKPTIDGMRKDGYPMVGCLFVGVMVTPDGDPKVLEYNVRFGDPETQTVLPLLKSDLLELMLATVEHRLDSVDFQVHADKYSTTVVVAAGGYPESYRKGDEITVKEPLPENTFIFHAGTKEENGKVVTAGGRVIAATAIADTLEEAVKKAYVGVDHISFKDKYNRTDIAHRAFKEKPKNKVSLTYEDAGVSVDAGNQLVEKIKKSVKSTKRPGADSEIGGFGGLFDLQRAGYTDINNTLLVAATDGVGTKLRVAQIMDIHNTVGIDLVAMNVNDLVVQGAEPLMFLDYFATAHLDIKVAADFVEGVADGCKLSGCALVGGETSEMPGMYAPGHYDTNGTAVGAVLKENILPKKDKMNAGDVLLGIASDGVHSNGFSLIRKIIETTDYSYTDPAPWNPKSTIGEEVLIPTRIYVKQLLPATRRGLILGLAHITGGGLVENIPRAIPDNLSAEVDMTTWNVPEIFKWLGKTGGVPINDILKTLNMGIGMVAIVKPENVEEVIKVLKEAGETVYTIGKLVERKDLPGCTIKNSEDLY</sequence>
<accession>G8EWC8</accession>
<reference evidence="7" key="1">
    <citation type="journal article" date="2014" name="Microbiol. Res.">
        <title>Structural and functional analysis of PUR2,5 gene encoding bifunctional enzyme of de novo purine biosynthesis in Ogataea (Hansenula) polymorpha CBS 4732T.</title>
        <authorList>
            <person name="Stoyanov A."/>
            <person name="Petrova P."/>
            <person name="Lyutskanova D."/>
            <person name="Lahtchev K."/>
        </authorList>
    </citation>
    <scope>NUCLEOTIDE SEQUENCE [GENOMIC DNA]</scope>
    <scope>FUNCTION</scope>
    <scope>CATALYTIC ACTIVITY</scope>
</reference>
<dbReference type="EC" id="6.3.4.13" evidence="6"/>
<dbReference type="EC" id="6.3.3.1" evidence="1"/>
<dbReference type="EMBL" id="JF967633">
    <property type="protein sequence ID" value="AEQ61912.1"/>
    <property type="molecule type" value="Genomic_DNA"/>
</dbReference>
<dbReference type="SMR" id="G8EWC8"/>
<dbReference type="PhylomeDB" id="G8EWC8"/>
<dbReference type="BRENDA" id="6.3.4.13">
    <property type="organism ID" value="2587"/>
</dbReference>
<dbReference type="UniPathway" id="UPA00074">
    <property type="reaction ID" value="UER00125"/>
</dbReference>
<dbReference type="UniPathway" id="UPA00074">
    <property type="reaction ID" value="UER00129"/>
</dbReference>
<dbReference type="GO" id="GO:0005829">
    <property type="term" value="C:cytosol"/>
    <property type="evidence" value="ECO:0007669"/>
    <property type="project" value="UniProtKB-SubCell"/>
</dbReference>
<dbReference type="GO" id="GO:0005524">
    <property type="term" value="F:ATP binding"/>
    <property type="evidence" value="ECO:0007669"/>
    <property type="project" value="UniProtKB-KW"/>
</dbReference>
<dbReference type="GO" id="GO:0046872">
    <property type="term" value="F:metal ion binding"/>
    <property type="evidence" value="ECO:0007669"/>
    <property type="project" value="UniProtKB-KW"/>
</dbReference>
<dbReference type="GO" id="GO:0004637">
    <property type="term" value="F:phosphoribosylamine-glycine ligase activity"/>
    <property type="evidence" value="ECO:0000316"/>
    <property type="project" value="UniProtKB"/>
</dbReference>
<dbReference type="GO" id="GO:0004641">
    <property type="term" value="F:phosphoribosylformylglycinamidine cyclo-ligase activity"/>
    <property type="evidence" value="ECO:0000316"/>
    <property type="project" value="UniProtKB"/>
</dbReference>
<dbReference type="GO" id="GO:0006189">
    <property type="term" value="P:'de novo' IMP biosynthetic process"/>
    <property type="evidence" value="ECO:0000315"/>
    <property type="project" value="UniProtKB"/>
</dbReference>
<dbReference type="GO" id="GO:0046084">
    <property type="term" value="P:adenine biosynthetic process"/>
    <property type="evidence" value="ECO:0007669"/>
    <property type="project" value="TreeGrafter"/>
</dbReference>
<dbReference type="CDD" id="cd02196">
    <property type="entry name" value="PurM"/>
    <property type="match status" value="1"/>
</dbReference>
<dbReference type="FunFam" id="3.40.50.20:FF:000006">
    <property type="entry name" value="Phosphoribosylamine--glycine ligase, chloroplastic"/>
    <property type="match status" value="1"/>
</dbReference>
<dbReference type="FunFam" id="3.30.1490.20:FF:000006">
    <property type="entry name" value="phosphoribosylamine--glycine ligase, chloroplastic-like"/>
    <property type="match status" value="1"/>
</dbReference>
<dbReference type="FunFam" id="3.30.1330.10:FF:000001">
    <property type="entry name" value="Phosphoribosylformylglycinamidine cyclo-ligase"/>
    <property type="match status" value="1"/>
</dbReference>
<dbReference type="FunFam" id="3.30.470.20:FF:000018">
    <property type="entry name" value="Trifunctional purine biosynthetic protein adenosine-3"/>
    <property type="match status" value="1"/>
</dbReference>
<dbReference type="FunFam" id="3.90.600.10:FF:000001">
    <property type="entry name" value="Trifunctional purine biosynthetic protein adenosine-3"/>
    <property type="match status" value="1"/>
</dbReference>
<dbReference type="FunFam" id="3.90.650.10:FF:000007">
    <property type="entry name" value="Trifunctional purine biosynthetic protein adenosine-3"/>
    <property type="match status" value="1"/>
</dbReference>
<dbReference type="Gene3D" id="3.40.50.20">
    <property type="match status" value="1"/>
</dbReference>
<dbReference type="Gene3D" id="3.30.1490.20">
    <property type="entry name" value="ATP-grasp fold, A domain"/>
    <property type="match status" value="1"/>
</dbReference>
<dbReference type="Gene3D" id="3.30.470.20">
    <property type="entry name" value="ATP-grasp fold, B domain"/>
    <property type="match status" value="1"/>
</dbReference>
<dbReference type="Gene3D" id="3.90.600.10">
    <property type="entry name" value="Phosphoribosylglycinamide synthetase, C-terminal domain"/>
    <property type="match status" value="1"/>
</dbReference>
<dbReference type="Gene3D" id="3.90.650.10">
    <property type="entry name" value="PurM-like C-terminal domain"/>
    <property type="match status" value="1"/>
</dbReference>
<dbReference type="Gene3D" id="3.30.1330.10">
    <property type="entry name" value="PurM-like, N-terminal domain"/>
    <property type="match status" value="1"/>
</dbReference>
<dbReference type="HAMAP" id="MF_00741">
    <property type="entry name" value="AIRS"/>
    <property type="match status" value="1"/>
</dbReference>
<dbReference type="HAMAP" id="MF_00138">
    <property type="entry name" value="GARS"/>
    <property type="match status" value="1"/>
</dbReference>
<dbReference type="InterPro" id="IPR011761">
    <property type="entry name" value="ATP-grasp"/>
</dbReference>
<dbReference type="InterPro" id="IPR013815">
    <property type="entry name" value="ATP_grasp_subdomain_1"/>
</dbReference>
<dbReference type="InterPro" id="IPR016185">
    <property type="entry name" value="PreATP-grasp_dom_sf"/>
</dbReference>
<dbReference type="InterPro" id="IPR020561">
    <property type="entry name" value="PRibGlycinamid_synth_ATP-grasp"/>
</dbReference>
<dbReference type="InterPro" id="IPR000115">
    <property type="entry name" value="PRibGlycinamide_synth"/>
</dbReference>
<dbReference type="InterPro" id="IPR020560">
    <property type="entry name" value="PRibGlycinamide_synth_C-dom"/>
</dbReference>
<dbReference type="InterPro" id="IPR037123">
    <property type="entry name" value="PRibGlycinamide_synth_C_sf"/>
</dbReference>
<dbReference type="InterPro" id="IPR020559">
    <property type="entry name" value="PRibGlycinamide_synth_CS"/>
</dbReference>
<dbReference type="InterPro" id="IPR020562">
    <property type="entry name" value="PRibGlycinamide_synth_N"/>
</dbReference>
<dbReference type="InterPro" id="IPR010918">
    <property type="entry name" value="PurM-like_C_dom"/>
</dbReference>
<dbReference type="InterPro" id="IPR036676">
    <property type="entry name" value="PurM-like_C_sf"/>
</dbReference>
<dbReference type="InterPro" id="IPR016188">
    <property type="entry name" value="PurM-like_N"/>
</dbReference>
<dbReference type="InterPro" id="IPR036921">
    <property type="entry name" value="PurM-like_N_sf"/>
</dbReference>
<dbReference type="InterPro" id="IPR004733">
    <property type="entry name" value="PurM_cligase"/>
</dbReference>
<dbReference type="InterPro" id="IPR011054">
    <property type="entry name" value="Rudment_hybrid_motif"/>
</dbReference>
<dbReference type="NCBIfam" id="TIGR00877">
    <property type="entry name" value="purD"/>
    <property type="match status" value="1"/>
</dbReference>
<dbReference type="NCBIfam" id="TIGR00878">
    <property type="entry name" value="purM"/>
    <property type="match status" value="1"/>
</dbReference>
<dbReference type="PANTHER" id="PTHR10520:SF12">
    <property type="entry name" value="TRIFUNCTIONAL PURINE BIOSYNTHETIC PROTEIN ADENOSINE-3"/>
    <property type="match status" value="1"/>
</dbReference>
<dbReference type="PANTHER" id="PTHR10520">
    <property type="entry name" value="TRIFUNCTIONAL PURINE BIOSYNTHETIC PROTEIN ADENOSINE-3-RELATED"/>
    <property type="match status" value="1"/>
</dbReference>
<dbReference type="Pfam" id="PF00586">
    <property type="entry name" value="AIRS"/>
    <property type="match status" value="1"/>
</dbReference>
<dbReference type="Pfam" id="PF02769">
    <property type="entry name" value="AIRS_C"/>
    <property type="match status" value="1"/>
</dbReference>
<dbReference type="Pfam" id="PF01071">
    <property type="entry name" value="GARS_A"/>
    <property type="match status" value="1"/>
</dbReference>
<dbReference type="Pfam" id="PF02843">
    <property type="entry name" value="GARS_C"/>
    <property type="match status" value="1"/>
</dbReference>
<dbReference type="Pfam" id="PF02844">
    <property type="entry name" value="GARS_N"/>
    <property type="match status" value="1"/>
</dbReference>
<dbReference type="SMART" id="SM01209">
    <property type="entry name" value="GARS_A"/>
    <property type="match status" value="1"/>
</dbReference>
<dbReference type="SMART" id="SM01210">
    <property type="entry name" value="GARS_C"/>
    <property type="match status" value="1"/>
</dbReference>
<dbReference type="SUPFAM" id="SSF56059">
    <property type="entry name" value="Glutathione synthetase ATP-binding domain-like"/>
    <property type="match status" value="1"/>
</dbReference>
<dbReference type="SUPFAM" id="SSF52440">
    <property type="entry name" value="PreATP-grasp domain"/>
    <property type="match status" value="1"/>
</dbReference>
<dbReference type="SUPFAM" id="SSF56042">
    <property type="entry name" value="PurM C-terminal domain-like"/>
    <property type="match status" value="1"/>
</dbReference>
<dbReference type="SUPFAM" id="SSF55326">
    <property type="entry name" value="PurM N-terminal domain-like"/>
    <property type="match status" value="1"/>
</dbReference>
<dbReference type="SUPFAM" id="SSF51246">
    <property type="entry name" value="Rudiment single hybrid motif"/>
    <property type="match status" value="1"/>
</dbReference>
<dbReference type="PROSITE" id="PS50975">
    <property type="entry name" value="ATP_GRASP"/>
    <property type="match status" value="1"/>
</dbReference>
<dbReference type="PROSITE" id="PS00184">
    <property type="entry name" value="GARS"/>
    <property type="match status" value="1"/>
</dbReference>
<feature type="chain" id="PRO_0000454644" description="Bifunctional purine biosynthetic protein PUR2,5">
    <location>
        <begin position="1"/>
        <end position="789"/>
    </location>
</feature>
<feature type="domain" description="ATP-grasp" evidence="3">
    <location>
        <begin position="114"/>
        <end position="321"/>
    </location>
</feature>
<feature type="region of interest" description="GARS" evidence="2">
    <location>
        <begin position="1"/>
        <end position="428"/>
    </location>
</feature>
<feature type="region of interest" description="AIRS" evidence="2">
    <location>
        <begin position="438"/>
        <end position="773"/>
    </location>
</feature>
<feature type="binding site" evidence="3">
    <location>
        <begin position="140"/>
        <end position="201"/>
    </location>
    <ligand>
        <name>ATP</name>
        <dbReference type="ChEBI" id="CHEBI:30616"/>
    </ligand>
</feature>
<feature type="binding site" evidence="3">
    <location>
        <position position="291"/>
    </location>
    <ligand>
        <name>Mg(2+)</name>
        <dbReference type="ChEBI" id="CHEBI:18420"/>
    </ligand>
</feature>
<feature type="binding site" evidence="3">
    <location>
        <position position="293"/>
    </location>
    <ligand>
        <name>Mg(2+)</name>
        <dbReference type="ChEBI" id="CHEBI:18420"/>
    </ligand>
</feature>
<name>PUR2_PICAN</name>
<keyword id="KW-0067">ATP-binding</keyword>
<keyword id="KW-0963">Cytoplasm</keyword>
<keyword id="KW-0436">Ligase</keyword>
<keyword id="KW-0460">Magnesium</keyword>
<keyword id="KW-0464">Manganese</keyword>
<keyword id="KW-0479">Metal-binding</keyword>
<keyword id="KW-0511">Multifunctional enzyme</keyword>
<keyword id="KW-0547">Nucleotide-binding</keyword>
<keyword id="KW-0658">Purine biosynthesis</keyword>
<evidence type="ECO:0000250" key="1">
    <source>
        <dbReference type="UniProtKB" id="P20772"/>
    </source>
</evidence>
<evidence type="ECO:0000255" key="2"/>
<evidence type="ECO:0000255" key="3">
    <source>
        <dbReference type="PROSITE-ProRule" id="PRU00409"/>
    </source>
</evidence>
<evidence type="ECO:0000303" key="4">
    <source>
    </source>
</evidence>
<evidence type="ECO:0000305" key="5"/>
<evidence type="ECO:0000305" key="6">
    <source>
    </source>
</evidence>
<evidence type="ECO:0000312" key="7">
    <source>
        <dbReference type="EMBL" id="AEQ61912.1"/>
    </source>
</evidence>
<protein>
    <recommendedName>
        <fullName evidence="4">Bifunctional purine biosynthetic protein PUR2,5</fullName>
    </recommendedName>
    <alternativeName>
        <fullName evidence="4">OpPUR2,5</fullName>
    </alternativeName>
    <domain>
        <recommendedName>
            <fullName evidence="5">Phosphoribosylamine--glycine ligase</fullName>
            <ecNumber evidence="6">6.3.4.13</ecNumber>
        </recommendedName>
        <alternativeName>
            <fullName evidence="5">Glycinamide ribonucleotide synthetase</fullName>
            <shortName evidence="1">GAR synthetase</shortName>
            <shortName evidence="5">GARS</shortName>
        </alternativeName>
        <alternativeName>
            <fullName evidence="5">Phosphoribosylglycinamide synthetase</fullName>
        </alternativeName>
    </domain>
    <domain>
        <recommendedName>
            <fullName evidence="5">Phosphoribosylformylglycinamidine cyclo-ligase</fullName>
            <ecNumber evidence="1">6.3.3.1</ecNumber>
        </recommendedName>
        <alternativeName>
            <fullName evidence="5">AIR synthase</fullName>
            <shortName evidence="1">AIR synthetase</shortName>
            <shortName evidence="5">AIRS</shortName>
        </alternativeName>
        <alternativeName>
            <fullName evidence="5">Phosphoribosyl-aminoimidazole synthetase</fullName>
        </alternativeName>
    </domain>
</protein>
<proteinExistence type="evidence at protein level"/>
<gene>
    <name evidence="4" type="primary">PUR25</name>
    <name evidence="4" type="synonym">PUR2,5</name>
</gene>